<protein>
    <recommendedName>
        <fullName evidence="1">Orotate phosphoribosyltransferase</fullName>
        <shortName evidence="1">OPRT</shortName>
        <shortName evidence="1">OPRTase</shortName>
        <ecNumber evidence="1">2.4.2.10</ecNumber>
    </recommendedName>
</protein>
<feature type="chain" id="PRO_0000298883" description="Orotate phosphoribosyltransferase">
    <location>
        <begin position="1"/>
        <end position="182"/>
    </location>
</feature>
<feature type="binding site" evidence="1">
    <location>
        <position position="93"/>
    </location>
    <ligand>
        <name>5-phospho-alpha-D-ribose 1-diphosphate</name>
        <dbReference type="ChEBI" id="CHEBI:58017"/>
        <note>ligand shared between dimeric partners</note>
    </ligand>
</feature>
<feature type="binding site" description="in other chain" evidence="1">
    <location>
        <position position="94"/>
    </location>
    <ligand>
        <name>5-phospho-alpha-D-ribose 1-diphosphate</name>
        <dbReference type="ChEBI" id="CHEBI:58017"/>
        <note>ligand shared between dimeric partners</note>
    </ligand>
</feature>
<feature type="binding site" evidence="1">
    <location>
        <position position="97"/>
    </location>
    <ligand>
        <name>5-phospho-alpha-D-ribose 1-diphosphate</name>
        <dbReference type="ChEBI" id="CHEBI:58017"/>
        <note>ligand shared between dimeric partners</note>
    </ligand>
</feature>
<feature type="binding site" description="in other chain" evidence="1">
    <location>
        <begin position="119"/>
        <end position="127"/>
    </location>
    <ligand>
        <name>5-phospho-alpha-D-ribose 1-diphosphate</name>
        <dbReference type="ChEBI" id="CHEBI:58017"/>
        <note>ligand shared between dimeric partners</note>
    </ligand>
</feature>
<feature type="binding site" evidence="1">
    <location>
        <position position="123"/>
    </location>
    <ligand>
        <name>orotate</name>
        <dbReference type="ChEBI" id="CHEBI:30839"/>
    </ligand>
</feature>
<feature type="binding site" evidence="1">
    <location>
        <position position="151"/>
    </location>
    <ligand>
        <name>orotate</name>
        <dbReference type="ChEBI" id="CHEBI:30839"/>
    </ligand>
</feature>
<reference key="1">
    <citation type="journal article" date="2006" name="BMC Genomics">
        <title>The genome of the square archaeon Haloquadratum walsbyi: life at the limits of water activity.</title>
        <authorList>
            <person name="Bolhuis H."/>
            <person name="Palm P."/>
            <person name="Wende A."/>
            <person name="Falb M."/>
            <person name="Rampp M."/>
            <person name="Rodriguez-Valera F."/>
            <person name="Pfeiffer F."/>
            <person name="Oesterhelt D."/>
        </authorList>
    </citation>
    <scope>NUCLEOTIDE SEQUENCE [LARGE SCALE GENOMIC DNA]</scope>
    <source>
        <strain>DSM 16790 / HBSQ001</strain>
    </source>
</reference>
<keyword id="KW-0328">Glycosyltransferase</keyword>
<keyword id="KW-0460">Magnesium</keyword>
<keyword id="KW-0665">Pyrimidine biosynthesis</keyword>
<keyword id="KW-1185">Reference proteome</keyword>
<keyword id="KW-0808">Transferase</keyword>
<comment type="function">
    <text evidence="1">Catalyzes the transfer of a ribosyl phosphate group from 5-phosphoribose 1-diphosphate to orotate, leading to the formation of orotidine monophosphate (OMP).</text>
</comment>
<comment type="catalytic activity">
    <reaction evidence="1">
        <text>orotidine 5'-phosphate + diphosphate = orotate + 5-phospho-alpha-D-ribose 1-diphosphate</text>
        <dbReference type="Rhea" id="RHEA:10380"/>
        <dbReference type="ChEBI" id="CHEBI:30839"/>
        <dbReference type="ChEBI" id="CHEBI:33019"/>
        <dbReference type="ChEBI" id="CHEBI:57538"/>
        <dbReference type="ChEBI" id="CHEBI:58017"/>
        <dbReference type="EC" id="2.4.2.10"/>
    </reaction>
</comment>
<comment type="cofactor">
    <cofactor evidence="1">
        <name>Mg(2+)</name>
        <dbReference type="ChEBI" id="CHEBI:18420"/>
    </cofactor>
</comment>
<comment type="pathway">
    <text evidence="1">Pyrimidine metabolism; UMP biosynthesis via de novo pathway; UMP from orotate: step 1/2.</text>
</comment>
<comment type="subunit">
    <text evidence="1">Homodimer.</text>
</comment>
<comment type="similarity">
    <text evidence="1">Belongs to the purine/pyrimidine phosphoribosyltransferase family. PyrE subfamily.</text>
</comment>
<accession>Q18FD1</accession>
<proteinExistence type="inferred from homology"/>
<dbReference type="EC" id="2.4.2.10" evidence="1"/>
<dbReference type="EMBL" id="AM180088">
    <property type="protein sequence ID" value="CAJ53327.1"/>
    <property type="molecule type" value="Genomic_DNA"/>
</dbReference>
<dbReference type="RefSeq" id="WP_011572432.1">
    <property type="nucleotide sequence ID" value="NC_008212.1"/>
</dbReference>
<dbReference type="SMR" id="Q18FD1"/>
<dbReference type="STRING" id="362976.HQ_3229A"/>
<dbReference type="GeneID" id="4194550"/>
<dbReference type="KEGG" id="hwa:HQ_3229A"/>
<dbReference type="eggNOG" id="arCOG00029">
    <property type="taxonomic scope" value="Archaea"/>
</dbReference>
<dbReference type="HOGENOM" id="CLU_074878_2_0_2"/>
<dbReference type="UniPathway" id="UPA00070">
    <property type="reaction ID" value="UER00119"/>
</dbReference>
<dbReference type="Proteomes" id="UP000001975">
    <property type="component" value="Chromosome"/>
</dbReference>
<dbReference type="GO" id="GO:0000287">
    <property type="term" value="F:magnesium ion binding"/>
    <property type="evidence" value="ECO:0007669"/>
    <property type="project" value="UniProtKB-UniRule"/>
</dbReference>
<dbReference type="GO" id="GO:0004588">
    <property type="term" value="F:orotate phosphoribosyltransferase activity"/>
    <property type="evidence" value="ECO:0007669"/>
    <property type="project" value="UniProtKB-UniRule"/>
</dbReference>
<dbReference type="GO" id="GO:0044205">
    <property type="term" value="P:'de novo' UMP biosynthetic process"/>
    <property type="evidence" value="ECO:0007669"/>
    <property type="project" value="UniProtKB-UniRule"/>
</dbReference>
<dbReference type="GO" id="GO:0019856">
    <property type="term" value="P:pyrimidine nucleobase biosynthetic process"/>
    <property type="evidence" value="ECO:0007669"/>
    <property type="project" value="TreeGrafter"/>
</dbReference>
<dbReference type="CDD" id="cd06223">
    <property type="entry name" value="PRTases_typeI"/>
    <property type="match status" value="1"/>
</dbReference>
<dbReference type="Gene3D" id="3.40.50.2020">
    <property type="match status" value="1"/>
</dbReference>
<dbReference type="HAMAP" id="MF_01208">
    <property type="entry name" value="PyrE"/>
    <property type="match status" value="1"/>
</dbReference>
<dbReference type="InterPro" id="IPR023031">
    <property type="entry name" value="OPRT"/>
</dbReference>
<dbReference type="InterPro" id="IPR004467">
    <property type="entry name" value="Or_phspho_trans_dom"/>
</dbReference>
<dbReference type="InterPro" id="IPR000836">
    <property type="entry name" value="PRibTrfase_dom"/>
</dbReference>
<dbReference type="InterPro" id="IPR029057">
    <property type="entry name" value="PRTase-like"/>
</dbReference>
<dbReference type="NCBIfam" id="TIGR00336">
    <property type="entry name" value="pyrE"/>
    <property type="match status" value="1"/>
</dbReference>
<dbReference type="PANTHER" id="PTHR19278">
    <property type="entry name" value="OROTATE PHOSPHORIBOSYLTRANSFERASE"/>
    <property type="match status" value="1"/>
</dbReference>
<dbReference type="PANTHER" id="PTHR19278:SF9">
    <property type="entry name" value="URIDINE 5'-MONOPHOSPHATE SYNTHASE"/>
    <property type="match status" value="1"/>
</dbReference>
<dbReference type="Pfam" id="PF00156">
    <property type="entry name" value="Pribosyltran"/>
    <property type="match status" value="1"/>
</dbReference>
<dbReference type="SUPFAM" id="SSF53271">
    <property type="entry name" value="PRTase-like"/>
    <property type="match status" value="1"/>
</dbReference>
<sequence>MTIPQSPTTEDIVAALRNADAVQYGEFELSHGGTSAYYIDKYLFETDPKCLQIIASAFADRINETTLAGVALGAVPLVAVTSTVAGQPYVVVRKKAKKYGTGNRIEGRLNEDEEVVVLEDIATTGTSAVEAVNALRDVGATVERVFVVVDRQEGAREQLESNNVEMEALVTATDLLVDDENV</sequence>
<gene>
    <name evidence="1" type="primary">pyrE</name>
    <name type="ordered locus">HQ_3229A</name>
</gene>
<evidence type="ECO:0000255" key="1">
    <source>
        <dbReference type="HAMAP-Rule" id="MF_01208"/>
    </source>
</evidence>
<name>PYRE_HALWD</name>
<organism>
    <name type="scientific">Haloquadratum walsbyi (strain DSM 16790 / HBSQ001)</name>
    <dbReference type="NCBI Taxonomy" id="362976"/>
    <lineage>
        <taxon>Archaea</taxon>
        <taxon>Methanobacteriati</taxon>
        <taxon>Methanobacteriota</taxon>
        <taxon>Stenosarchaea group</taxon>
        <taxon>Halobacteria</taxon>
        <taxon>Halobacteriales</taxon>
        <taxon>Haloferacaceae</taxon>
        <taxon>Haloquadratum</taxon>
    </lineage>
</organism>